<feature type="chain" id="PRO_0000156185" description="Phosphopantetheine adenylyltransferase">
    <location>
        <begin position="1"/>
        <end position="165"/>
    </location>
</feature>
<feature type="binding site" evidence="1">
    <location>
        <begin position="10"/>
        <end position="11"/>
    </location>
    <ligand>
        <name>ATP</name>
        <dbReference type="ChEBI" id="CHEBI:30616"/>
    </ligand>
</feature>
<feature type="binding site" evidence="1">
    <location>
        <position position="10"/>
    </location>
    <ligand>
        <name>substrate</name>
    </ligand>
</feature>
<feature type="binding site" evidence="1">
    <location>
        <position position="18"/>
    </location>
    <ligand>
        <name>ATP</name>
        <dbReference type="ChEBI" id="CHEBI:30616"/>
    </ligand>
</feature>
<feature type="binding site" evidence="1">
    <location>
        <position position="42"/>
    </location>
    <ligand>
        <name>substrate</name>
    </ligand>
</feature>
<feature type="binding site" evidence="1">
    <location>
        <position position="75"/>
    </location>
    <ligand>
        <name>substrate</name>
    </ligand>
</feature>
<feature type="binding site" evidence="1">
    <location>
        <position position="89"/>
    </location>
    <ligand>
        <name>substrate</name>
    </ligand>
</feature>
<feature type="binding site" evidence="1">
    <location>
        <begin position="90"/>
        <end position="92"/>
    </location>
    <ligand>
        <name>ATP</name>
        <dbReference type="ChEBI" id="CHEBI:30616"/>
    </ligand>
</feature>
<feature type="binding site" evidence="1">
    <location>
        <position position="100"/>
    </location>
    <ligand>
        <name>ATP</name>
        <dbReference type="ChEBI" id="CHEBI:30616"/>
    </ligand>
</feature>
<feature type="binding site" evidence="1">
    <location>
        <begin position="125"/>
        <end position="131"/>
    </location>
    <ligand>
        <name>ATP</name>
        <dbReference type="ChEBI" id="CHEBI:30616"/>
    </ligand>
</feature>
<feature type="site" description="Transition state stabilizer" evidence="1">
    <location>
        <position position="18"/>
    </location>
</feature>
<accession>Q9Z613</accession>
<keyword id="KW-0067">ATP-binding</keyword>
<keyword id="KW-0173">Coenzyme A biosynthesis</keyword>
<keyword id="KW-0963">Cytoplasm</keyword>
<keyword id="KW-0460">Magnesium</keyword>
<keyword id="KW-0547">Nucleotide-binding</keyword>
<keyword id="KW-0548">Nucleotidyltransferase</keyword>
<keyword id="KW-0808">Transferase</keyword>
<comment type="function">
    <text evidence="1">Reversibly transfers an adenylyl group from ATP to 4'-phosphopantetheine, yielding dephospho-CoA (dPCoA) and pyrophosphate.</text>
</comment>
<comment type="catalytic activity">
    <reaction evidence="1">
        <text>(R)-4'-phosphopantetheine + ATP + H(+) = 3'-dephospho-CoA + diphosphate</text>
        <dbReference type="Rhea" id="RHEA:19801"/>
        <dbReference type="ChEBI" id="CHEBI:15378"/>
        <dbReference type="ChEBI" id="CHEBI:30616"/>
        <dbReference type="ChEBI" id="CHEBI:33019"/>
        <dbReference type="ChEBI" id="CHEBI:57328"/>
        <dbReference type="ChEBI" id="CHEBI:61723"/>
        <dbReference type="EC" id="2.7.7.3"/>
    </reaction>
</comment>
<comment type="cofactor">
    <cofactor evidence="1">
        <name>Mg(2+)</name>
        <dbReference type="ChEBI" id="CHEBI:18420"/>
    </cofactor>
</comment>
<comment type="pathway">
    <text evidence="1">Cofactor biosynthesis; coenzyme A biosynthesis; CoA from (R)-pantothenate: step 4/5.</text>
</comment>
<comment type="subunit">
    <text evidence="1">Homohexamer.</text>
</comment>
<comment type="subcellular location">
    <subcellularLocation>
        <location evidence="1">Cytoplasm</location>
    </subcellularLocation>
</comment>
<comment type="similarity">
    <text evidence="1">Belongs to the bacterial CoaD family.</text>
</comment>
<gene>
    <name evidence="1" type="primary">coaD</name>
    <name type="synonym">kdtB</name>
    <name type="ordered locus">BUsg_562</name>
</gene>
<reference key="1">
    <citation type="submission" date="1998-11" db="EMBL/GenBank/DDBJ databases">
        <title>Buchnera plasmid-associated trpEG probably originated from a chromosomal location between hslU and fpr.</title>
        <authorList>
            <person name="Clark M.A."/>
            <person name="Baumann P."/>
            <person name="Moran M.A."/>
        </authorList>
    </citation>
    <scope>NUCLEOTIDE SEQUENCE [GENOMIC DNA]</scope>
</reference>
<reference key="2">
    <citation type="journal article" date="2002" name="Science">
        <title>50 million years of genomic stasis in endosymbiotic bacteria.</title>
        <authorList>
            <person name="Tamas I."/>
            <person name="Klasson L."/>
            <person name="Canbaeck B."/>
            <person name="Naeslund A.K."/>
            <person name="Eriksson A.-S."/>
            <person name="Wernegreen J.J."/>
            <person name="Sandstroem J.P."/>
            <person name="Moran N.A."/>
            <person name="Andersson S.G.E."/>
        </authorList>
    </citation>
    <scope>NUCLEOTIDE SEQUENCE [LARGE SCALE GENOMIC DNA]</scope>
    <source>
        <strain>Sg</strain>
    </source>
</reference>
<dbReference type="EC" id="2.7.7.3" evidence="1"/>
<dbReference type="EMBL" id="AF108665">
    <property type="protein sequence ID" value="AAD19637.1"/>
    <property type="molecule type" value="Genomic_DNA"/>
</dbReference>
<dbReference type="EMBL" id="AE013218">
    <property type="protein sequence ID" value="AAM68099.1"/>
    <property type="molecule type" value="Genomic_DNA"/>
</dbReference>
<dbReference type="RefSeq" id="WP_011054065.1">
    <property type="nucleotide sequence ID" value="NC_004061.1"/>
</dbReference>
<dbReference type="SMR" id="Q9Z613"/>
<dbReference type="STRING" id="198804.BUsg_562"/>
<dbReference type="GeneID" id="93004040"/>
<dbReference type="KEGG" id="bas:BUsg_562"/>
<dbReference type="eggNOG" id="COG0669">
    <property type="taxonomic scope" value="Bacteria"/>
</dbReference>
<dbReference type="HOGENOM" id="CLU_100149_0_1_6"/>
<dbReference type="UniPathway" id="UPA00241">
    <property type="reaction ID" value="UER00355"/>
</dbReference>
<dbReference type="Proteomes" id="UP000000416">
    <property type="component" value="Chromosome"/>
</dbReference>
<dbReference type="GO" id="GO:0005737">
    <property type="term" value="C:cytoplasm"/>
    <property type="evidence" value="ECO:0007669"/>
    <property type="project" value="UniProtKB-SubCell"/>
</dbReference>
<dbReference type="GO" id="GO:0005524">
    <property type="term" value="F:ATP binding"/>
    <property type="evidence" value="ECO:0007669"/>
    <property type="project" value="UniProtKB-KW"/>
</dbReference>
<dbReference type="GO" id="GO:0004595">
    <property type="term" value="F:pantetheine-phosphate adenylyltransferase activity"/>
    <property type="evidence" value="ECO:0007669"/>
    <property type="project" value="UniProtKB-UniRule"/>
</dbReference>
<dbReference type="GO" id="GO:0015937">
    <property type="term" value="P:coenzyme A biosynthetic process"/>
    <property type="evidence" value="ECO:0007669"/>
    <property type="project" value="UniProtKB-UniRule"/>
</dbReference>
<dbReference type="CDD" id="cd02163">
    <property type="entry name" value="PPAT"/>
    <property type="match status" value="1"/>
</dbReference>
<dbReference type="Gene3D" id="3.40.50.620">
    <property type="entry name" value="HUPs"/>
    <property type="match status" value="1"/>
</dbReference>
<dbReference type="HAMAP" id="MF_00151">
    <property type="entry name" value="PPAT_bact"/>
    <property type="match status" value="1"/>
</dbReference>
<dbReference type="InterPro" id="IPR004821">
    <property type="entry name" value="Cyt_trans-like"/>
</dbReference>
<dbReference type="InterPro" id="IPR001980">
    <property type="entry name" value="PPAT"/>
</dbReference>
<dbReference type="InterPro" id="IPR014729">
    <property type="entry name" value="Rossmann-like_a/b/a_fold"/>
</dbReference>
<dbReference type="NCBIfam" id="TIGR01510">
    <property type="entry name" value="coaD_prev_kdtB"/>
    <property type="match status" value="1"/>
</dbReference>
<dbReference type="NCBIfam" id="TIGR00125">
    <property type="entry name" value="cyt_tran_rel"/>
    <property type="match status" value="1"/>
</dbReference>
<dbReference type="PANTHER" id="PTHR21342">
    <property type="entry name" value="PHOSPHOPANTETHEINE ADENYLYLTRANSFERASE"/>
    <property type="match status" value="1"/>
</dbReference>
<dbReference type="PANTHER" id="PTHR21342:SF1">
    <property type="entry name" value="PHOSPHOPANTETHEINE ADENYLYLTRANSFERASE"/>
    <property type="match status" value="1"/>
</dbReference>
<dbReference type="Pfam" id="PF01467">
    <property type="entry name" value="CTP_transf_like"/>
    <property type="match status" value="1"/>
</dbReference>
<dbReference type="PRINTS" id="PR01020">
    <property type="entry name" value="LPSBIOSNTHSS"/>
</dbReference>
<dbReference type="SUPFAM" id="SSF52374">
    <property type="entry name" value="Nucleotidylyl transferase"/>
    <property type="match status" value="1"/>
</dbReference>
<name>COAD_BUCAP</name>
<organism>
    <name type="scientific">Buchnera aphidicola subsp. Schizaphis graminum (strain Sg)</name>
    <dbReference type="NCBI Taxonomy" id="198804"/>
    <lineage>
        <taxon>Bacteria</taxon>
        <taxon>Pseudomonadati</taxon>
        <taxon>Pseudomonadota</taxon>
        <taxon>Gammaproteobacteria</taxon>
        <taxon>Enterobacterales</taxon>
        <taxon>Erwiniaceae</taxon>
        <taxon>Buchnera</taxon>
    </lineage>
</organism>
<sequence length="165" mass="19018">MKKIAIYPGTFDPITYGHLDVITRATKIFDNIIIAISNNVHKKTIFNLKERIKLTKLATFHLKNIKKVIGFNGLLANLAKREKSNILIRGVRTIFDFDYEIKLAAINKQIYPDLDSIFFLSSKEVSFISSSFVKEIAKYQGNIKPYLPKEIHFALIKKFKDIPQK</sequence>
<protein>
    <recommendedName>
        <fullName evidence="1">Phosphopantetheine adenylyltransferase</fullName>
        <ecNumber evidence="1">2.7.7.3</ecNumber>
    </recommendedName>
    <alternativeName>
        <fullName evidence="1">Dephospho-CoA pyrophosphorylase</fullName>
    </alternativeName>
    <alternativeName>
        <fullName evidence="1">Pantetheine-phosphate adenylyltransferase</fullName>
        <shortName evidence="1">PPAT</shortName>
    </alternativeName>
</protein>
<proteinExistence type="inferred from homology"/>
<evidence type="ECO:0000255" key="1">
    <source>
        <dbReference type="HAMAP-Rule" id="MF_00151"/>
    </source>
</evidence>